<protein>
    <recommendedName>
        <fullName evidence="1">Cytochrome b6</fullName>
    </recommendedName>
</protein>
<feature type="chain" id="PRO_0000275308" description="Cytochrome b6">
    <location>
        <begin position="1"/>
        <end position="215"/>
    </location>
</feature>
<feature type="transmembrane region" description="Helical" evidence="1">
    <location>
        <begin position="32"/>
        <end position="52"/>
    </location>
</feature>
<feature type="transmembrane region" description="Helical" evidence="1">
    <location>
        <begin position="90"/>
        <end position="110"/>
    </location>
</feature>
<feature type="transmembrane region" description="Helical" evidence="1">
    <location>
        <begin position="116"/>
        <end position="136"/>
    </location>
</feature>
<feature type="transmembrane region" description="Helical" evidence="1">
    <location>
        <begin position="186"/>
        <end position="206"/>
    </location>
</feature>
<feature type="binding site" description="covalent" evidence="1">
    <location>
        <position position="35"/>
    </location>
    <ligand>
        <name>heme c</name>
        <dbReference type="ChEBI" id="CHEBI:61717"/>
    </ligand>
</feature>
<feature type="binding site" description="axial binding residue" evidence="1">
    <location>
        <position position="86"/>
    </location>
    <ligand>
        <name>heme b</name>
        <dbReference type="ChEBI" id="CHEBI:60344"/>
        <label>2</label>
    </ligand>
    <ligandPart>
        <name>Fe</name>
        <dbReference type="ChEBI" id="CHEBI:18248"/>
    </ligandPart>
</feature>
<feature type="binding site" description="axial binding residue" evidence="1">
    <location>
        <position position="100"/>
    </location>
    <ligand>
        <name>heme b</name>
        <dbReference type="ChEBI" id="CHEBI:60344"/>
        <label>1</label>
    </ligand>
    <ligandPart>
        <name>Fe</name>
        <dbReference type="ChEBI" id="CHEBI:18248"/>
    </ligandPart>
</feature>
<feature type="binding site" description="axial binding residue" evidence="1">
    <location>
        <position position="187"/>
    </location>
    <ligand>
        <name>heme b</name>
        <dbReference type="ChEBI" id="CHEBI:60344"/>
        <label>2</label>
    </ligand>
    <ligandPart>
        <name>Fe</name>
        <dbReference type="ChEBI" id="CHEBI:18248"/>
    </ligandPart>
</feature>
<feature type="binding site" description="axial binding residue" evidence="1">
    <location>
        <position position="202"/>
    </location>
    <ligand>
        <name>heme b</name>
        <dbReference type="ChEBI" id="CHEBI:60344"/>
        <label>1</label>
    </ligand>
    <ligandPart>
        <name>Fe</name>
        <dbReference type="ChEBI" id="CHEBI:18248"/>
    </ligandPart>
</feature>
<accession>A1EA38</accession>
<sequence length="215" mass="24167">MSKVYDWFEERLEIQAIADDITSKYVPPHVNIFYCLGGITLTCFLVQVATGFAMTFYYRPTVTEAFSSVQYIMTEANFGWLIRSVHRWSASMMVLMMILHVFRVYLTGGFKKPRELTWVTGVVLAVLTASFGVTGYSLPWDQIGYWAVKIVTGVPDAIPVIGSPLVELLRGSASVGQSTLTRFYSLHTFVLPLLTAVFMLMHFPMIRKQGISGPL</sequence>
<keyword id="KW-0150">Chloroplast</keyword>
<keyword id="KW-0249">Electron transport</keyword>
<keyword id="KW-0349">Heme</keyword>
<keyword id="KW-0408">Iron</keyword>
<keyword id="KW-0472">Membrane</keyword>
<keyword id="KW-0479">Metal-binding</keyword>
<keyword id="KW-0602">Photosynthesis</keyword>
<keyword id="KW-0934">Plastid</keyword>
<keyword id="KW-0793">Thylakoid</keyword>
<keyword id="KW-0812">Transmembrane</keyword>
<keyword id="KW-1133">Transmembrane helix</keyword>
<keyword id="KW-0813">Transport</keyword>
<reference key="1">
    <citation type="journal article" date="2007" name="Theor. Appl. Genet.">
        <title>Complete chloroplast genome sequences of Hordeum vulgare, Sorghum bicolor and Agrostis stolonifera, and comparative analyses with other grass genomes.</title>
        <authorList>
            <person name="Saski C."/>
            <person name="Lee S.-B."/>
            <person name="Fjellheim S."/>
            <person name="Guda C."/>
            <person name="Jansen R.K."/>
            <person name="Luo H."/>
            <person name="Tomkins J."/>
            <person name="Rognli O.A."/>
            <person name="Daniell H."/>
            <person name="Clarke J.L."/>
        </authorList>
    </citation>
    <scope>NUCLEOTIDE SEQUENCE [LARGE SCALE GENOMIC DNA]</scope>
    <source>
        <strain>cv. Penn A-4</strain>
    </source>
</reference>
<comment type="function">
    <text evidence="1">Component of the cytochrome b6-f complex, which mediates electron transfer between photosystem II (PSII) and photosystem I (PSI), cyclic electron flow around PSI, and state transitions.</text>
</comment>
<comment type="cofactor">
    <cofactor evidence="1">
        <name>heme b</name>
        <dbReference type="ChEBI" id="CHEBI:60344"/>
    </cofactor>
    <text evidence="1">Binds 2 heme b groups non-covalently with two histidine residues as axial ligands.</text>
</comment>
<comment type="cofactor">
    <cofactor evidence="1">
        <name>heme c</name>
        <dbReference type="ChEBI" id="CHEBI:61717"/>
    </cofactor>
    <text evidence="1">Binds one heme group covalently by a single cysteine link with no axial amino acid ligand. This heme was named heme ci.</text>
</comment>
<comment type="subunit">
    <text evidence="1">The 4 large subunits of the cytochrome b6-f complex are cytochrome b6, subunit IV (17 kDa polypeptide, PetD), cytochrome f and the Rieske protein, while the 4 small subunits are PetG, PetL, PetM and PetN. The complex functions as a dimer.</text>
</comment>
<comment type="subcellular location">
    <subcellularLocation>
        <location evidence="1">Plastid</location>
        <location evidence="1">Chloroplast thylakoid membrane</location>
        <topology evidence="1">Multi-pass membrane protein</topology>
    </subcellularLocation>
</comment>
<comment type="miscellaneous">
    <text evidence="1">Heme 1 (or BH or b566) is high-potential and absorbs at about 566 nm, and heme 2 (or BL or b562) is low-potential and absorbs at about 562 nm.</text>
</comment>
<comment type="similarity">
    <text evidence="1">Belongs to the cytochrome b family. PetB subfamily.</text>
</comment>
<gene>
    <name evidence="1" type="primary">petB</name>
</gene>
<geneLocation type="chloroplast"/>
<dbReference type="EMBL" id="EF115543">
    <property type="protein sequence ID" value="ABK79609.1"/>
    <property type="molecule type" value="Genomic_DNA"/>
</dbReference>
<dbReference type="RefSeq" id="YP_874766.1">
    <property type="nucleotide sequence ID" value="NC_008591.1"/>
</dbReference>
<dbReference type="SMR" id="A1EA38"/>
<dbReference type="GeneID" id="4525011"/>
<dbReference type="GO" id="GO:0009535">
    <property type="term" value="C:chloroplast thylakoid membrane"/>
    <property type="evidence" value="ECO:0007669"/>
    <property type="project" value="UniProtKB-SubCell"/>
</dbReference>
<dbReference type="GO" id="GO:0045158">
    <property type="term" value="F:electron transporter, transferring electrons within cytochrome b6/f complex of photosystem II activity"/>
    <property type="evidence" value="ECO:0007669"/>
    <property type="project" value="UniProtKB-UniRule"/>
</dbReference>
<dbReference type="GO" id="GO:0046872">
    <property type="term" value="F:metal ion binding"/>
    <property type="evidence" value="ECO:0007669"/>
    <property type="project" value="UniProtKB-KW"/>
</dbReference>
<dbReference type="GO" id="GO:0016491">
    <property type="term" value="F:oxidoreductase activity"/>
    <property type="evidence" value="ECO:0007669"/>
    <property type="project" value="InterPro"/>
</dbReference>
<dbReference type="GO" id="GO:0015979">
    <property type="term" value="P:photosynthesis"/>
    <property type="evidence" value="ECO:0007669"/>
    <property type="project" value="UniProtKB-UniRule"/>
</dbReference>
<dbReference type="GO" id="GO:0022904">
    <property type="term" value="P:respiratory electron transport chain"/>
    <property type="evidence" value="ECO:0007669"/>
    <property type="project" value="InterPro"/>
</dbReference>
<dbReference type="CDD" id="cd00284">
    <property type="entry name" value="Cytochrome_b_N"/>
    <property type="match status" value="1"/>
</dbReference>
<dbReference type="FunFam" id="1.20.810.10:FF:000001">
    <property type="entry name" value="Cytochrome b6"/>
    <property type="match status" value="1"/>
</dbReference>
<dbReference type="Gene3D" id="1.20.810.10">
    <property type="entry name" value="Cytochrome Bc1 Complex, Chain C"/>
    <property type="match status" value="1"/>
</dbReference>
<dbReference type="HAMAP" id="MF_00633">
    <property type="entry name" value="Cytb6_f_cytb6"/>
    <property type="match status" value="1"/>
</dbReference>
<dbReference type="InterPro" id="IPR005797">
    <property type="entry name" value="Cyt_b/b6_N"/>
</dbReference>
<dbReference type="InterPro" id="IPR023530">
    <property type="entry name" value="Cyt_B6_PetB"/>
</dbReference>
<dbReference type="InterPro" id="IPR027387">
    <property type="entry name" value="Cytb/b6-like_sf"/>
</dbReference>
<dbReference type="InterPro" id="IPR048259">
    <property type="entry name" value="Cytochrome_b_N_euk/bac"/>
</dbReference>
<dbReference type="InterPro" id="IPR016174">
    <property type="entry name" value="Di-haem_cyt_TM"/>
</dbReference>
<dbReference type="NCBIfam" id="NF002990">
    <property type="entry name" value="PRK03735.1"/>
    <property type="match status" value="1"/>
</dbReference>
<dbReference type="PANTHER" id="PTHR19271">
    <property type="entry name" value="CYTOCHROME B"/>
    <property type="match status" value="1"/>
</dbReference>
<dbReference type="PANTHER" id="PTHR19271:SF16">
    <property type="entry name" value="CYTOCHROME B"/>
    <property type="match status" value="1"/>
</dbReference>
<dbReference type="Pfam" id="PF00033">
    <property type="entry name" value="Cytochrome_B"/>
    <property type="match status" value="1"/>
</dbReference>
<dbReference type="PIRSF" id="PIRSF000032">
    <property type="entry name" value="Cytochrome_b6"/>
    <property type="match status" value="1"/>
</dbReference>
<dbReference type="SUPFAM" id="SSF81342">
    <property type="entry name" value="Transmembrane di-heme cytochromes"/>
    <property type="match status" value="1"/>
</dbReference>
<dbReference type="PROSITE" id="PS51002">
    <property type="entry name" value="CYTB_NTER"/>
    <property type="match status" value="1"/>
</dbReference>
<name>CYB6_AGRST</name>
<proteinExistence type="inferred from homology"/>
<evidence type="ECO:0000255" key="1">
    <source>
        <dbReference type="HAMAP-Rule" id="MF_00633"/>
    </source>
</evidence>
<organism>
    <name type="scientific">Agrostis stolonifera</name>
    <name type="common">Creeping bentgrass</name>
    <dbReference type="NCBI Taxonomy" id="63632"/>
    <lineage>
        <taxon>Eukaryota</taxon>
        <taxon>Viridiplantae</taxon>
        <taxon>Streptophyta</taxon>
        <taxon>Embryophyta</taxon>
        <taxon>Tracheophyta</taxon>
        <taxon>Spermatophyta</taxon>
        <taxon>Magnoliopsida</taxon>
        <taxon>Liliopsida</taxon>
        <taxon>Poales</taxon>
        <taxon>Poaceae</taxon>
        <taxon>BOP clade</taxon>
        <taxon>Pooideae</taxon>
        <taxon>Poodae</taxon>
        <taxon>Poeae</taxon>
        <taxon>Poeae Chloroplast Group 1 (Aveneae type)</taxon>
        <taxon>Agrostidodinae</taxon>
        <taxon>Agrostidinae</taxon>
        <taxon>Agrostis</taxon>
    </lineage>
</organism>